<comment type="function">
    <text evidence="1">Plays an essential role in the initiation and regulation of chromosomal replication. ATP-DnaA binds to the origin of replication (oriC) to initiate formation of the DNA replication initiation complex once per cell cycle. Binds the DnaA box (a 9 base pair repeat at the origin) and separates the double-stranded (ds)DNA. Forms a right-handed helical filament on oriC DNA; dsDNA binds to the exterior of the filament while single-stranded (ss)DNA is stabiized in the filament's interior. The ATP-DnaA-oriC complex binds and stabilizes one strand of the AT-rich DNA unwinding element (DUE), permitting loading of DNA polymerase. After initiation quickly degrades to an ADP-DnaA complex that is not apt for DNA replication. Binds acidic phospholipids.</text>
</comment>
<comment type="subunit">
    <text evidence="1">Oligomerizes as a right-handed, spiral filament on DNA at oriC.</text>
</comment>
<comment type="subcellular location">
    <subcellularLocation>
        <location evidence="1">Cytoplasm</location>
    </subcellularLocation>
</comment>
<comment type="domain">
    <text evidence="1">Domain I is involved in oligomerization and binding regulators, domain II is flexibile and of varying length in different bacteria, domain III forms the AAA+ region, while domain IV binds dsDNA.</text>
</comment>
<comment type="similarity">
    <text evidence="1">Belongs to the DnaA family.</text>
</comment>
<proteinExistence type="inferred from homology"/>
<feature type="chain" id="PRO_1000048638" description="Chromosomal replication initiator protein DnaA">
    <location>
        <begin position="1"/>
        <end position="443"/>
    </location>
</feature>
<feature type="region of interest" description="Domain I, interacts with DnaA modulators" evidence="1">
    <location>
        <begin position="1"/>
        <end position="75"/>
    </location>
</feature>
<feature type="region of interest" description="Domain II" evidence="1">
    <location>
        <begin position="75"/>
        <end position="105"/>
    </location>
</feature>
<feature type="region of interest" description="Domain III, AAA+ region" evidence="1">
    <location>
        <begin position="106"/>
        <end position="321"/>
    </location>
</feature>
<feature type="region of interest" description="Domain IV, binds dsDNA" evidence="1">
    <location>
        <begin position="322"/>
        <end position="443"/>
    </location>
</feature>
<feature type="binding site" evidence="1">
    <location>
        <position position="150"/>
    </location>
    <ligand>
        <name>ATP</name>
        <dbReference type="ChEBI" id="CHEBI:30616"/>
    </ligand>
</feature>
<feature type="binding site" evidence="1">
    <location>
        <position position="152"/>
    </location>
    <ligand>
        <name>ATP</name>
        <dbReference type="ChEBI" id="CHEBI:30616"/>
    </ligand>
</feature>
<feature type="binding site" evidence="1">
    <location>
        <position position="153"/>
    </location>
    <ligand>
        <name>ATP</name>
        <dbReference type="ChEBI" id="CHEBI:30616"/>
    </ligand>
</feature>
<feature type="binding site" evidence="1">
    <location>
        <position position="154"/>
    </location>
    <ligand>
        <name>ATP</name>
        <dbReference type="ChEBI" id="CHEBI:30616"/>
    </ligand>
</feature>
<keyword id="KW-0067">ATP-binding</keyword>
<keyword id="KW-0963">Cytoplasm</keyword>
<keyword id="KW-0235">DNA replication</keyword>
<keyword id="KW-0238">DNA-binding</keyword>
<keyword id="KW-0446">Lipid-binding</keyword>
<keyword id="KW-0547">Nucleotide-binding</keyword>
<keyword id="KW-1185">Reference proteome</keyword>
<evidence type="ECO:0000255" key="1">
    <source>
        <dbReference type="HAMAP-Rule" id="MF_00377"/>
    </source>
</evidence>
<protein>
    <recommendedName>
        <fullName evidence="1">Chromosomal replication initiator protein DnaA</fullName>
    </recommendedName>
</protein>
<organism>
    <name type="scientific">Acetivibrio thermocellus (strain ATCC 27405 / DSM 1237 / JCM 9322 / NBRC 103400 / NCIMB 10682 / NRRL B-4536 / VPI 7372)</name>
    <name type="common">Clostridium thermocellum</name>
    <dbReference type="NCBI Taxonomy" id="203119"/>
    <lineage>
        <taxon>Bacteria</taxon>
        <taxon>Bacillati</taxon>
        <taxon>Bacillota</taxon>
        <taxon>Clostridia</taxon>
        <taxon>Eubacteriales</taxon>
        <taxon>Oscillospiraceae</taxon>
        <taxon>Acetivibrio</taxon>
    </lineage>
</organism>
<dbReference type="EMBL" id="CP000568">
    <property type="protein sequence ID" value="ABN53573.1"/>
    <property type="molecule type" value="Genomic_DNA"/>
</dbReference>
<dbReference type="RefSeq" id="WP_020457780.1">
    <property type="nucleotide sequence ID" value="NC_009012.1"/>
</dbReference>
<dbReference type="SMR" id="A3DHZ4"/>
<dbReference type="STRING" id="203119.Cthe_2371"/>
<dbReference type="GeneID" id="35804002"/>
<dbReference type="KEGG" id="cth:Cthe_2371"/>
<dbReference type="eggNOG" id="COG0593">
    <property type="taxonomic scope" value="Bacteria"/>
</dbReference>
<dbReference type="HOGENOM" id="CLU_026910_3_1_9"/>
<dbReference type="OrthoDB" id="9807019at2"/>
<dbReference type="Proteomes" id="UP000002145">
    <property type="component" value="Chromosome"/>
</dbReference>
<dbReference type="GO" id="GO:0005737">
    <property type="term" value="C:cytoplasm"/>
    <property type="evidence" value="ECO:0007669"/>
    <property type="project" value="UniProtKB-SubCell"/>
</dbReference>
<dbReference type="GO" id="GO:0005886">
    <property type="term" value="C:plasma membrane"/>
    <property type="evidence" value="ECO:0007669"/>
    <property type="project" value="TreeGrafter"/>
</dbReference>
<dbReference type="GO" id="GO:0005524">
    <property type="term" value="F:ATP binding"/>
    <property type="evidence" value="ECO:0007669"/>
    <property type="project" value="UniProtKB-UniRule"/>
</dbReference>
<dbReference type="GO" id="GO:0016887">
    <property type="term" value="F:ATP hydrolysis activity"/>
    <property type="evidence" value="ECO:0007669"/>
    <property type="project" value="InterPro"/>
</dbReference>
<dbReference type="GO" id="GO:0003688">
    <property type="term" value="F:DNA replication origin binding"/>
    <property type="evidence" value="ECO:0007669"/>
    <property type="project" value="UniProtKB-UniRule"/>
</dbReference>
<dbReference type="GO" id="GO:0008289">
    <property type="term" value="F:lipid binding"/>
    <property type="evidence" value="ECO:0007669"/>
    <property type="project" value="UniProtKB-KW"/>
</dbReference>
<dbReference type="GO" id="GO:0006270">
    <property type="term" value="P:DNA replication initiation"/>
    <property type="evidence" value="ECO:0007669"/>
    <property type="project" value="UniProtKB-UniRule"/>
</dbReference>
<dbReference type="GO" id="GO:0006275">
    <property type="term" value="P:regulation of DNA replication"/>
    <property type="evidence" value="ECO:0007669"/>
    <property type="project" value="UniProtKB-UniRule"/>
</dbReference>
<dbReference type="CDD" id="cd00009">
    <property type="entry name" value="AAA"/>
    <property type="match status" value="1"/>
</dbReference>
<dbReference type="CDD" id="cd06571">
    <property type="entry name" value="Bac_DnaA_C"/>
    <property type="match status" value="1"/>
</dbReference>
<dbReference type="FunFam" id="1.10.8.60:FF:000003">
    <property type="entry name" value="Chromosomal replication initiator protein DnaA"/>
    <property type="match status" value="1"/>
</dbReference>
<dbReference type="FunFam" id="3.40.50.300:FF:000150">
    <property type="entry name" value="Chromosomal replication initiator protein DnaA"/>
    <property type="match status" value="1"/>
</dbReference>
<dbReference type="Gene3D" id="1.10.1750.10">
    <property type="match status" value="1"/>
</dbReference>
<dbReference type="Gene3D" id="1.10.8.60">
    <property type="match status" value="1"/>
</dbReference>
<dbReference type="Gene3D" id="3.30.300.180">
    <property type="match status" value="1"/>
</dbReference>
<dbReference type="Gene3D" id="3.40.50.300">
    <property type="entry name" value="P-loop containing nucleotide triphosphate hydrolases"/>
    <property type="match status" value="1"/>
</dbReference>
<dbReference type="HAMAP" id="MF_00377">
    <property type="entry name" value="DnaA_bact"/>
    <property type="match status" value="1"/>
</dbReference>
<dbReference type="InterPro" id="IPR003593">
    <property type="entry name" value="AAA+_ATPase"/>
</dbReference>
<dbReference type="InterPro" id="IPR001957">
    <property type="entry name" value="Chromosome_initiator_DnaA"/>
</dbReference>
<dbReference type="InterPro" id="IPR020591">
    <property type="entry name" value="Chromosome_initiator_DnaA-like"/>
</dbReference>
<dbReference type="InterPro" id="IPR018312">
    <property type="entry name" value="Chromosome_initiator_DnaA_CS"/>
</dbReference>
<dbReference type="InterPro" id="IPR013159">
    <property type="entry name" value="DnaA_C"/>
</dbReference>
<dbReference type="InterPro" id="IPR013317">
    <property type="entry name" value="DnaA_dom"/>
</dbReference>
<dbReference type="InterPro" id="IPR024633">
    <property type="entry name" value="DnaA_N_dom"/>
</dbReference>
<dbReference type="InterPro" id="IPR038454">
    <property type="entry name" value="DnaA_N_sf"/>
</dbReference>
<dbReference type="InterPro" id="IPR027417">
    <property type="entry name" value="P-loop_NTPase"/>
</dbReference>
<dbReference type="InterPro" id="IPR010921">
    <property type="entry name" value="Trp_repressor/repl_initiator"/>
</dbReference>
<dbReference type="NCBIfam" id="TIGR00362">
    <property type="entry name" value="DnaA"/>
    <property type="match status" value="1"/>
</dbReference>
<dbReference type="NCBIfam" id="NF010686">
    <property type="entry name" value="PRK14086.1"/>
    <property type="match status" value="1"/>
</dbReference>
<dbReference type="PANTHER" id="PTHR30050">
    <property type="entry name" value="CHROMOSOMAL REPLICATION INITIATOR PROTEIN DNAA"/>
    <property type="match status" value="1"/>
</dbReference>
<dbReference type="PANTHER" id="PTHR30050:SF2">
    <property type="entry name" value="CHROMOSOMAL REPLICATION INITIATOR PROTEIN DNAA"/>
    <property type="match status" value="1"/>
</dbReference>
<dbReference type="Pfam" id="PF00308">
    <property type="entry name" value="Bac_DnaA"/>
    <property type="match status" value="1"/>
</dbReference>
<dbReference type="Pfam" id="PF08299">
    <property type="entry name" value="Bac_DnaA_C"/>
    <property type="match status" value="1"/>
</dbReference>
<dbReference type="Pfam" id="PF11638">
    <property type="entry name" value="DnaA_N"/>
    <property type="match status" value="1"/>
</dbReference>
<dbReference type="PRINTS" id="PR00051">
    <property type="entry name" value="DNAA"/>
</dbReference>
<dbReference type="SMART" id="SM00382">
    <property type="entry name" value="AAA"/>
    <property type="match status" value="1"/>
</dbReference>
<dbReference type="SMART" id="SM00760">
    <property type="entry name" value="Bac_DnaA_C"/>
    <property type="match status" value="1"/>
</dbReference>
<dbReference type="SUPFAM" id="SSF52540">
    <property type="entry name" value="P-loop containing nucleoside triphosphate hydrolases"/>
    <property type="match status" value="1"/>
</dbReference>
<dbReference type="SUPFAM" id="SSF48295">
    <property type="entry name" value="TrpR-like"/>
    <property type="match status" value="1"/>
</dbReference>
<dbReference type="PROSITE" id="PS01008">
    <property type="entry name" value="DNAA"/>
    <property type="match status" value="1"/>
</dbReference>
<sequence length="443" mass="50281">MNTQLNEIWQKTLGLLKNELTEISFNTWIKTIDPLSLTGNTINLAVPAEFNKGILESRYQTLIKNAIKQVTFKEYEIAFIVPSQENLNKLTKQTESAGNEDSPLSVLNPKYTFDTFVIGNSNRFAHAAALAVAEAPGKAYNPLFIYGGVGLGKTHLMHAIGHYILEQNSSQKVLYVSSEKFTNELINAIKDNRNEEFRSKYRNIDVLLIDDIQFIAGKERTEEEFFHTFNALYEANKQIILSSDKPPKEISLEDRLRSRFEWGLIADMQAPDLETRIAILRKKAQLENLTVPNEVIVFIADKIASNIRELEGALNRVIAYSSLTENEITVELASEALKDILSANKAKVLNCTTIQEAVARYFDIRPEEFKSKKRTRDIAFPRQIAMYLCRELTEMSLPKIGEEFGGRDHTTVIHACEKISEEIESNSETRRAVSEIKRNLLGK</sequence>
<accession>A3DHZ4</accession>
<name>DNAA_ACET2</name>
<reference key="1">
    <citation type="submission" date="2007-02" db="EMBL/GenBank/DDBJ databases">
        <title>Complete sequence of Clostridium thermocellum ATCC 27405.</title>
        <authorList>
            <consortium name="US DOE Joint Genome Institute"/>
            <person name="Copeland A."/>
            <person name="Lucas S."/>
            <person name="Lapidus A."/>
            <person name="Barry K."/>
            <person name="Detter J.C."/>
            <person name="Glavina del Rio T."/>
            <person name="Hammon N."/>
            <person name="Israni S."/>
            <person name="Dalin E."/>
            <person name="Tice H."/>
            <person name="Pitluck S."/>
            <person name="Chertkov O."/>
            <person name="Brettin T."/>
            <person name="Bruce D."/>
            <person name="Han C."/>
            <person name="Tapia R."/>
            <person name="Gilna P."/>
            <person name="Schmutz J."/>
            <person name="Larimer F."/>
            <person name="Land M."/>
            <person name="Hauser L."/>
            <person name="Kyrpides N."/>
            <person name="Mikhailova N."/>
            <person name="Wu J.H.D."/>
            <person name="Newcomb M."/>
            <person name="Richardson P."/>
        </authorList>
    </citation>
    <scope>NUCLEOTIDE SEQUENCE [LARGE SCALE GENOMIC DNA]</scope>
    <source>
        <strain>ATCC 27405 / DSM 1237 / JCM 9322 / NBRC 103400 / NCIMB 10682 / NRRL B-4536 / VPI 7372</strain>
    </source>
</reference>
<gene>
    <name evidence="1" type="primary">dnaA</name>
    <name type="ordered locus">Cthe_2371</name>
</gene>